<reference key="1">
    <citation type="journal article" date="1998" name="Science">
        <title>Genome sequence of an obligate intracellular pathogen of humans: Chlamydia trachomatis.</title>
        <authorList>
            <person name="Stephens R.S."/>
            <person name="Kalman S."/>
            <person name="Lammel C.J."/>
            <person name="Fan J."/>
            <person name="Marathe R."/>
            <person name="Aravind L."/>
            <person name="Mitchell W.P."/>
            <person name="Olinger L."/>
            <person name="Tatusov R.L."/>
            <person name="Zhao Q."/>
            <person name="Koonin E.V."/>
            <person name="Davis R.W."/>
        </authorList>
    </citation>
    <scope>NUCLEOTIDE SEQUENCE [LARGE SCALE GENOMIC DNA]</scope>
    <source>
        <strain>ATCC VR-885 / DSM 19411 / UW-3/Cx</strain>
    </source>
</reference>
<organism>
    <name type="scientific">Chlamydia trachomatis serovar D (strain ATCC VR-885 / DSM 19411 / UW-3/Cx)</name>
    <dbReference type="NCBI Taxonomy" id="272561"/>
    <lineage>
        <taxon>Bacteria</taxon>
        <taxon>Pseudomonadati</taxon>
        <taxon>Chlamydiota</taxon>
        <taxon>Chlamydiia</taxon>
        <taxon>Chlamydiales</taxon>
        <taxon>Chlamydiaceae</taxon>
        <taxon>Chlamydia/Chlamydophila group</taxon>
        <taxon>Chlamydia</taxon>
    </lineage>
</organism>
<protein>
    <recommendedName>
        <fullName>Probable metal transport system membrane protein CT_069</fullName>
    </recommendedName>
</protein>
<comment type="function">
    <text>Part of an ATP-driven transport system CT_067/CT_068/CT_069/CT_070 for a metal.</text>
</comment>
<comment type="subcellular location">
    <subcellularLocation>
        <location evidence="3">Cell inner membrane</location>
        <topology evidence="3">Multi-pass membrane protein</topology>
    </subcellularLocation>
</comment>
<comment type="similarity">
    <text evidence="3">Belongs to the ABC-3 integral membrane protein family.</text>
</comment>
<proteinExistence type="inferred from homology"/>
<name>Y069_CHLTR</name>
<sequence>MLSCIFQDTIFLSSFLAVSLICMTTALWGTILLVERQPLLSESLSHACYPGLLIGALLSYKVPAFSDSLWVIIFFGCLASVLGCLGISFLEKKLAMHKDSALCLVLVSFFGVGVILVSYVKDCCPLLYNKINAYLYGQAATLGYTEAKLALIIFCLSAVVLWWWYRQISVAIFDREFAYSCGLRTRTAELVVLVFISLVIVSGVRSVGILLISAMFVAPPLSARQLSDRLSTILILSSIFGGICGALGCYFSVAFTCQTVVEGKPISIILPTGPLVVFFAGVLVFLCLIFSWKTGWITRYFRRKWFLFSRDEEHLLKIFWYLREQNTYQVGMRDFVRSRKYQEYFGDKVFPRFRMFLLCKKGLVSCSEHQWSLTDKGLARAAKLVRAHRLWESYLVSQLDFNKNEVHHFAEEMEHVLTDELDSTLSQMLQDPDYDPHQREIPKRTRKSDGC</sequence>
<gene>
    <name type="ordered locus">CT_069</name>
</gene>
<accession>O84072</accession>
<keyword id="KW-0997">Cell inner membrane</keyword>
<keyword id="KW-1003">Cell membrane</keyword>
<keyword id="KW-0472">Membrane</keyword>
<keyword id="KW-1185">Reference proteome</keyword>
<keyword id="KW-0812">Transmembrane</keyword>
<keyword id="KW-1133">Transmembrane helix</keyword>
<keyword id="KW-0813">Transport</keyword>
<feature type="chain" id="PRO_0000171165" description="Probable metal transport system membrane protein CT_069">
    <location>
        <begin position="1"/>
        <end position="451"/>
    </location>
</feature>
<feature type="transmembrane region" description="Helical" evidence="1">
    <location>
        <begin position="14"/>
        <end position="34"/>
    </location>
</feature>
<feature type="transmembrane region" description="Helical" evidence="1">
    <location>
        <begin position="38"/>
        <end position="58"/>
    </location>
</feature>
<feature type="transmembrane region" description="Helical" evidence="1">
    <location>
        <begin position="70"/>
        <end position="90"/>
    </location>
</feature>
<feature type="transmembrane region" description="Helical" evidence="1">
    <location>
        <begin position="100"/>
        <end position="120"/>
    </location>
</feature>
<feature type="transmembrane region" description="Helical" evidence="1">
    <location>
        <begin position="145"/>
        <end position="165"/>
    </location>
</feature>
<feature type="transmembrane region" description="Helical" evidence="1">
    <location>
        <begin position="192"/>
        <end position="212"/>
    </location>
</feature>
<feature type="transmembrane region" description="Helical" evidence="1">
    <location>
        <begin position="233"/>
        <end position="253"/>
    </location>
</feature>
<feature type="transmembrane region" description="Helical" evidence="1">
    <location>
        <begin position="269"/>
        <end position="289"/>
    </location>
</feature>
<feature type="region of interest" description="Disordered" evidence="2">
    <location>
        <begin position="432"/>
        <end position="451"/>
    </location>
</feature>
<feature type="compositionally biased region" description="Basic and acidic residues" evidence="2">
    <location>
        <begin position="434"/>
        <end position="451"/>
    </location>
</feature>
<evidence type="ECO:0000255" key="1"/>
<evidence type="ECO:0000256" key="2">
    <source>
        <dbReference type="SAM" id="MobiDB-lite"/>
    </source>
</evidence>
<evidence type="ECO:0000305" key="3"/>
<dbReference type="EMBL" id="AE001273">
    <property type="protein sequence ID" value="AAC67660.1"/>
    <property type="molecule type" value="Genomic_DNA"/>
</dbReference>
<dbReference type="PIR" id="G71561">
    <property type="entry name" value="G71561"/>
</dbReference>
<dbReference type="RefSeq" id="WP_009871418.1">
    <property type="nucleotide sequence ID" value="NC_000117.1"/>
</dbReference>
<dbReference type="SMR" id="O84072"/>
<dbReference type="FunCoup" id="O84072">
    <property type="interactions" value="22"/>
</dbReference>
<dbReference type="STRING" id="272561.CT_069"/>
<dbReference type="TCDB" id="3.A.1.15.12">
    <property type="family name" value="the atp-binding cassette (abc) superfamily"/>
</dbReference>
<dbReference type="EnsemblBacteria" id="AAC67660">
    <property type="protein sequence ID" value="AAC67660"/>
    <property type="gene ID" value="CT_069"/>
</dbReference>
<dbReference type="KEGG" id="ctr:CT_069"/>
<dbReference type="PATRIC" id="fig|272561.5.peg.78"/>
<dbReference type="HOGENOM" id="CLU_028808_0_2_0"/>
<dbReference type="InParanoid" id="O84072"/>
<dbReference type="OrthoDB" id="9798540at2"/>
<dbReference type="Proteomes" id="UP000000431">
    <property type="component" value="Chromosome"/>
</dbReference>
<dbReference type="GO" id="GO:0043190">
    <property type="term" value="C:ATP-binding cassette (ABC) transporter complex"/>
    <property type="evidence" value="ECO:0007669"/>
    <property type="project" value="InterPro"/>
</dbReference>
<dbReference type="GO" id="GO:0005886">
    <property type="term" value="C:plasma membrane"/>
    <property type="evidence" value="ECO:0000318"/>
    <property type="project" value="GO_Central"/>
</dbReference>
<dbReference type="GO" id="GO:0003700">
    <property type="term" value="F:DNA-binding transcription factor activity"/>
    <property type="evidence" value="ECO:0007669"/>
    <property type="project" value="InterPro"/>
</dbReference>
<dbReference type="GO" id="GO:0046983">
    <property type="term" value="F:protein dimerization activity"/>
    <property type="evidence" value="ECO:0007669"/>
    <property type="project" value="InterPro"/>
</dbReference>
<dbReference type="GO" id="GO:0046914">
    <property type="term" value="F:transition metal ion binding"/>
    <property type="evidence" value="ECO:0007669"/>
    <property type="project" value="InterPro"/>
</dbReference>
<dbReference type="GO" id="GO:0010043">
    <property type="term" value="P:response to zinc ion"/>
    <property type="evidence" value="ECO:0000318"/>
    <property type="project" value="GO_Central"/>
</dbReference>
<dbReference type="GO" id="GO:0055085">
    <property type="term" value="P:transmembrane transport"/>
    <property type="evidence" value="ECO:0007669"/>
    <property type="project" value="InterPro"/>
</dbReference>
<dbReference type="CDD" id="cd06550">
    <property type="entry name" value="TM_ABC_iron-siderophores_like"/>
    <property type="match status" value="1"/>
</dbReference>
<dbReference type="Gene3D" id="1.10.3470.10">
    <property type="entry name" value="ABC transporter involved in vitamin B12 uptake, BtuC"/>
    <property type="match status" value="1"/>
</dbReference>
<dbReference type="Gene3D" id="1.10.10.10">
    <property type="entry name" value="Winged helix-like DNA-binding domain superfamily/Winged helix DNA-binding domain"/>
    <property type="match status" value="1"/>
</dbReference>
<dbReference type="InterPro" id="IPR037294">
    <property type="entry name" value="ABC_BtuC-like"/>
</dbReference>
<dbReference type="InterPro" id="IPR001626">
    <property type="entry name" value="ABC_TroCD"/>
</dbReference>
<dbReference type="InterPro" id="IPR001367">
    <property type="entry name" value="Fe_dep_repressor"/>
</dbReference>
<dbReference type="InterPro" id="IPR036421">
    <property type="entry name" value="Fe_dep_repressor_sf"/>
</dbReference>
<dbReference type="InterPro" id="IPR022689">
    <property type="entry name" value="Iron_dep_repressor"/>
</dbReference>
<dbReference type="InterPro" id="IPR036388">
    <property type="entry name" value="WH-like_DNA-bd_sf"/>
</dbReference>
<dbReference type="PANTHER" id="PTHR30477">
    <property type="entry name" value="ABC-TRANSPORTER METAL-BINDING PROTEIN"/>
    <property type="match status" value="1"/>
</dbReference>
<dbReference type="PANTHER" id="PTHR30477:SF3">
    <property type="entry name" value="METAL TRANSPORT SYSTEM MEMBRANE PROTEIN CT_069-RELATED"/>
    <property type="match status" value="1"/>
</dbReference>
<dbReference type="Pfam" id="PF00950">
    <property type="entry name" value="ABC-3"/>
    <property type="match status" value="1"/>
</dbReference>
<dbReference type="Pfam" id="PF02742">
    <property type="entry name" value="Fe_dep_repr_C"/>
    <property type="match status" value="1"/>
</dbReference>
<dbReference type="SMART" id="SM00529">
    <property type="entry name" value="HTH_DTXR"/>
    <property type="match status" value="1"/>
</dbReference>
<dbReference type="SUPFAM" id="SSF81345">
    <property type="entry name" value="ABC transporter involved in vitamin B12 uptake, BtuC"/>
    <property type="match status" value="1"/>
</dbReference>
<dbReference type="SUPFAM" id="SSF47979">
    <property type="entry name" value="Iron-dependent repressor protein, dimerization domain"/>
    <property type="match status" value="1"/>
</dbReference>